<dbReference type="EMBL" id="D70897">
    <property type="protein sequence ID" value="BAA20476.1"/>
    <property type="molecule type" value="mRNA"/>
</dbReference>
<dbReference type="RefSeq" id="NP_999053.1">
    <molecule id="O02839-1"/>
    <property type="nucleotide sequence ID" value="NM_213888.1"/>
</dbReference>
<dbReference type="SMR" id="O02839"/>
<dbReference type="FunCoup" id="O02839">
    <property type="interactions" value="122"/>
</dbReference>
<dbReference type="STRING" id="9823.ENSSSCP00000043156"/>
<dbReference type="GlyCosmos" id="O02839">
    <property type="glycosylation" value="9 sites, No reported glycans"/>
</dbReference>
<dbReference type="GlyGen" id="O02839">
    <property type="glycosylation" value="9 sites"/>
</dbReference>
<dbReference type="iPTMnet" id="O02839"/>
<dbReference type="PeptideAtlas" id="O02839"/>
<dbReference type="GeneID" id="396922"/>
<dbReference type="KEGG" id="ssc:396922"/>
<dbReference type="CTD" id="4179"/>
<dbReference type="InParanoid" id="O02839"/>
<dbReference type="OrthoDB" id="6127264at2759"/>
<dbReference type="Proteomes" id="UP000008227">
    <property type="component" value="Unplaced"/>
</dbReference>
<dbReference type="Proteomes" id="UP000314985">
    <property type="component" value="Unplaced"/>
</dbReference>
<dbReference type="Proteomes" id="UP000694570">
    <property type="component" value="Unplaced"/>
</dbReference>
<dbReference type="Proteomes" id="UP000694571">
    <property type="component" value="Unplaced"/>
</dbReference>
<dbReference type="Proteomes" id="UP000694720">
    <property type="component" value="Unplaced"/>
</dbReference>
<dbReference type="Proteomes" id="UP000694722">
    <property type="component" value="Unplaced"/>
</dbReference>
<dbReference type="Proteomes" id="UP000694723">
    <property type="component" value="Unplaced"/>
</dbReference>
<dbReference type="Proteomes" id="UP000694724">
    <property type="component" value="Unplaced"/>
</dbReference>
<dbReference type="Proteomes" id="UP000694725">
    <property type="component" value="Unplaced"/>
</dbReference>
<dbReference type="Proteomes" id="UP000694726">
    <property type="component" value="Unplaced"/>
</dbReference>
<dbReference type="Proteomes" id="UP000694727">
    <property type="component" value="Unplaced"/>
</dbReference>
<dbReference type="Proteomes" id="UP000694728">
    <property type="component" value="Unplaced"/>
</dbReference>
<dbReference type="GO" id="GO:0009986">
    <property type="term" value="C:cell surface"/>
    <property type="evidence" value="ECO:0007669"/>
    <property type="project" value="InterPro"/>
</dbReference>
<dbReference type="GO" id="GO:0005615">
    <property type="term" value="C:extracellular space"/>
    <property type="evidence" value="ECO:0000318"/>
    <property type="project" value="GO_Central"/>
</dbReference>
<dbReference type="GO" id="GO:0002079">
    <property type="term" value="C:inner acrosomal membrane"/>
    <property type="evidence" value="ECO:0007669"/>
    <property type="project" value="UniProtKB-SubCell"/>
</dbReference>
<dbReference type="GO" id="GO:0016020">
    <property type="term" value="C:membrane"/>
    <property type="evidence" value="ECO:0000314"/>
    <property type="project" value="AgBase"/>
</dbReference>
<dbReference type="GO" id="GO:0005886">
    <property type="term" value="C:plasma membrane"/>
    <property type="evidence" value="ECO:0000318"/>
    <property type="project" value="GO_Central"/>
</dbReference>
<dbReference type="GO" id="GO:0004175">
    <property type="term" value="F:endopeptidase activity"/>
    <property type="evidence" value="ECO:0000314"/>
    <property type="project" value="AgBase"/>
</dbReference>
<dbReference type="GO" id="GO:0006958">
    <property type="term" value="P:complement activation, classical pathway"/>
    <property type="evidence" value="ECO:0007669"/>
    <property type="project" value="UniProtKB-KW"/>
</dbReference>
<dbReference type="GO" id="GO:0045087">
    <property type="term" value="P:innate immune response"/>
    <property type="evidence" value="ECO:0007669"/>
    <property type="project" value="UniProtKB-KW"/>
</dbReference>
<dbReference type="GO" id="GO:0045957">
    <property type="term" value="P:negative regulation of complement activation, alternative pathway"/>
    <property type="evidence" value="ECO:0000314"/>
    <property type="project" value="AgBase"/>
</dbReference>
<dbReference type="GO" id="GO:0045959">
    <property type="term" value="P:negative regulation of complement activation, classical pathway"/>
    <property type="evidence" value="ECO:0000314"/>
    <property type="project" value="AgBase"/>
</dbReference>
<dbReference type="GO" id="GO:0006508">
    <property type="term" value="P:proteolysis"/>
    <property type="evidence" value="ECO:0000314"/>
    <property type="project" value="AgBase"/>
</dbReference>
<dbReference type="GO" id="GO:0007338">
    <property type="term" value="P:single fertilization"/>
    <property type="evidence" value="ECO:0007669"/>
    <property type="project" value="UniProtKB-KW"/>
</dbReference>
<dbReference type="GO" id="GO:0002456">
    <property type="term" value="P:T cell mediated immunity"/>
    <property type="evidence" value="ECO:0000318"/>
    <property type="project" value="GO_Central"/>
</dbReference>
<dbReference type="CDD" id="cd00033">
    <property type="entry name" value="CCP"/>
    <property type="match status" value="4"/>
</dbReference>
<dbReference type="CDD" id="cd12087">
    <property type="entry name" value="TM_EGFR-like"/>
    <property type="match status" value="1"/>
</dbReference>
<dbReference type="FunFam" id="2.10.70.10:FF:000014">
    <property type="entry name" value="Membrane cofactor protein"/>
    <property type="match status" value="1"/>
</dbReference>
<dbReference type="FunFam" id="2.10.70.10:FF:000042">
    <property type="entry name" value="Membrane cofactor protein"/>
    <property type="match status" value="1"/>
</dbReference>
<dbReference type="Gene3D" id="2.10.70.10">
    <property type="entry name" value="Complement Module, domain 1"/>
    <property type="match status" value="4"/>
</dbReference>
<dbReference type="InterPro" id="IPR017341">
    <property type="entry name" value="CD46"/>
</dbReference>
<dbReference type="InterPro" id="IPR051277">
    <property type="entry name" value="SEZ6_CSMD_C4BPB_Regulators"/>
</dbReference>
<dbReference type="InterPro" id="IPR035976">
    <property type="entry name" value="Sushi/SCR/CCP_sf"/>
</dbReference>
<dbReference type="InterPro" id="IPR000436">
    <property type="entry name" value="Sushi_SCR_CCP_dom"/>
</dbReference>
<dbReference type="PANTHER" id="PTHR45656">
    <property type="entry name" value="PROTEIN CBR-CLEC-78"/>
    <property type="match status" value="1"/>
</dbReference>
<dbReference type="PANTHER" id="PTHR45656:SF4">
    <property type="entry name" value="PROTEIN CBR-CLEC-78"/>
    <property type="match status" value="1"/>
</dbReference>
<dbReference type="Pfam" id="PF00084">
    <property type="entry name" value="Sushi"/>
    <property type="match status" value="4"/>
</dbReference>
<dbReference type="PIRSF" id="PIRSF037971">
    <property type="entry name" value="TLX_CD46"/>
    <property type="match status" value="1"/>
</dbReference>
<dbReference type="SMART" id="SM00032">
    <property type="entry name" value="CCP"/>
    <property type="match status" value="4"/>
</dbReference>
<dbReference type="SUPFAM" id="SSF57535">
    <property type="entry name" value="Complement control module/SCR domain"/>
    <property type="match status" value="4"/>
</dbReference>
<dbReference type="PROSITE" id="PS50923">
    <property type="entry name" value="SUSHI"/>
    <property type="match status" value="4"/>
</dbReference>
<evidence type="ECO:0000250" key="1"/>
<evidence type="ECO:0000250" key="2">
    <source>
        <dbReference type="UniProtKB" id="P15529"/>
    </source>
</evidence>
<evidence type="ECO:0000255" key="3"/>
<evidence type="ECO:0000255" key="4">
    <source>
        <dbReference type="PROSITE-ProRule" id="PRU00302"/>
    </source>
</evidence>
<evidence type="ECO:0000256" key="5">
    <source>
        <dbReference type="SAM" id="MobiDB-lite"/>
    </source>
</evidence>
<evidence type="ECO:0000269" key="6">
    <source>
    </source>
</evidence>
<evidence type="ECO:0000269" key="7">
    <source>
    </source>
</evidence>
<evidence type="ECO:0000269" key="8">
    <source>
    </source>
</evidence>
<evidence type="ECO:0000303" key="9">
    <source>
    </source>
</evidence>
<evidence type="ECO:0000305" key="10"/>
<reference key="1">
    <citation type="journal article" date="1997" name="Int. Immunol.">
        <title>Molecular cloning of a pig homologue of membrane cofactor protein (CD46).</title>
        <authorList>
            <person name="Toyomura K."/>
            <person name="Fujimura T."/>
            <person name="Murakami H."/>
            <person name="Natsume T."/>
            <person name="Shigehisa T."/>
            <person name="Inoue N."/>
            <person name="Takeda J."/>
            <person name="Kinoshita T."/>
        </authorList>
    </citation>
    <scope>NUCLEOTIDE SEQUENCE [MRNA] (ISOFORMS 1 AND 2)</scope>
    <scope>FUNCTION</scope>
    <scope>TISSUE SPECIFICITY</scope>
    <source>
        <tissue>Aortic endothelium</tissue>
    </source>
</reference>
<reference key="2">
    <citation type="journal article" date="1997" name="J. Immunol.">
        <title>Purification and characterization of the pig analogue of human membrane cofactor protein (CD46/MCP).</title>
        <authorList>
            <person name="van den Berg C.W."/>
            <person name="Perez de la Lastra J.M."/>
            <person name="Llanes D."/>
            <person name="Morgan B.P."/>
        </authorList>
    </citation>
    <scope>PROTEIN SEQUENCE OF 45-72</scope>
    <scope>SUBCELLULAR LOCATION</scope>
    <scope>TISSUE SPECIFICITY</scope>
    <scope>FUNCTION</scope>
    <scope>GLYCOSYLATION AT ASN-60</scope>
</reference>
<reference key="3">
    <citation type="journal article" date="1999" name="Immunology">
        <title>Distribution of membrane cofactor protein (MCP/CD46) on pig tissues. Relevance To xenotransplantation.</title>
        <authorList>
            <person name="Perez de la Lastra J.M."/>
            <person name="Hanna S.M."/>
            <person name="Morgan B.P."/>
        </authorList>
    </citation>
    <scope>TISSUE SPECIFICITY</scope>
</reference>
<organism>
    <name type="scientific">Sus scrofa</name>
    <name type="common">Pig</name>
    <dbReference type="NCBI Taxonomy" id="9823"/>
    <lineage>
        <taxon>Eukaryota</taxon>
        <taxon>Metazoa</taxon>
        <taxon>Chordata</taxon>
        <taxon>Craniata</taxon>
        <taxon>Vertebrata</taxon>
        <taxon>Euteleostomi</taxon>
        <taxon>Mammalia</taxon>
        <taxon>Eutheria</taxon>
        <taxon>Laurasiatheria</taxon>
        <taxon>Artiodactyla</taxon>
        <taxon>Suina</taxon>
        <taxon>Suidae</taxon>
        <taxon>Sus</taxon>
    </lineage>
</organism>
<sequence>MMAFCALRKALPCRPENPFSSRCFVEILWVSLALVFLLPMPSDACDEPPKFESMRPQFLNTTYRPGDRVEYECRPGFQPMVPALPTFSVCQDDNTWSPLQEACRRKACSNLPDPLNGQVSYPNGDMLFGSKAQFTCNTGFYIIGAETVYCQVSGNVMAWSEPSPLCEKILCKPPGEIPNGKYTNSHKDVFEYNEVVTYSCLSSTGPDEFSLVGESSLFCIGKDEWSSDPPECKVVKCPYPVVPNGEIVSGFGSKFYYKAEVVFKCNAGFTLHGRDTIVCGANSTWEPEMPQCIKDSKPTDPPATPGPSHPGPPSPSDASPPKDAESLDGGIIAAIVVGVLAAIAVIAGGVYFFHHKYNKKRSK</sequence>
<feature type="signal peptide" evidence="7">
    <location>
        <begin position="1"/>
        <end position="44"/>
    </location>
</feature>
<feature type="chain" id="PRO_0000238972" description="Membrane cofactor protein">
    <location>
        <begin position="45"/>
        <end position="363"/>
    </location>
</feature>
<feature type="topological domain" description="Extracellular" evidence="3">
    <location>
        <begin position="45"/>
        <end position="329"/>
    </location>
</feature>
<feature type="transmembrane region" description="Helical" evidence="3">
    <location>
        <begin position="330"/>
        <end position="350"/>
    </location>
</feature>
<feature type="topological domain" description="Cytoplasmic" evidence="3">
    <location>
        <begin position="351"/>
        <end position="363"/>
    </location>
</feature>
<feature type="domain" description="Sushi 1" evidence="4">
    <location>
        <begin position="45"/>
        <end position="105"/>
    </location>
</feature>
<feature type="domain" description="Sushi 2" evidence="4">
    <location>
        <begin position="106"/>
        <end position="168"/>
    </location>
</feature>
<feature type="domain" description="Sushi 3" evidence="4">
    <location>
        <begin position="169"/>
        <end position="234"/>
    </location>
</feature>
<feature type="domain" description="Sushi 4" evidence="4">
    <location>
        <begin position="235"/>
        <end position="294"/>
    </location>
</feature>
<feature type="region of interest" description="Disordered" evidence="5">
    <location>
        <begin position="290"/>
        <end position="324"/>
    </location>
</feature>
<feature type="compositionally biased region" description="Pro residues" evidence="5">
    <location>
        <begin position="299"/>
        <end position="315"/>
    </location>
</feature>
<feature type="glycosylation site" description="N-linked (GlcNAc...) asparagine" evidence="7">
    <location>
        <position position="60"/>
    </location>
</feature>
<feature type="glycosylation site" description="O-linked (GalNAc...) threonine" evidence="3">
    <location>
        <position position="86"/>
    </location>
</feature>
<feature type="glycosylation site" description="O-linked (GalNAc...) serine" evidence="3">
    <location>
        <position position="296"/>
    </location>
</feature>
<feature type="glycosylation site" description="O-linked (GalNAc...) threonine" evidence="3">
    <location>
        <position position="299"/>
    </location>
</feature>
<feature type="glycosylation site" description="O-linked (GalNAc...) threonine" evidence="3">
    <location>
        <position position="304"/>
    </location>
</feature>
<feature type="glycosylation site" description="O-linked (GalNAc...) serine" evidence="3">
    <location>
        <position position="308"/>
    </location>
</feature>
<feature type="glycosylation site" description="O-linked (GalNAc...) serine" evidence="3">
    <location>
        <position position="314"/>
    </location>
</feature>
<feature type="glycosylation site" description="O-linked (GalNAc...) serine" evidence="3">
    <location>
        <position position="316"/>
    </location>
</feature>
<feature type="glycosylation site" description="O-linked (GalNAc...) serine" evidence="3">
    <location>
        <position position="319"/>
    </location>
</feature>
<feature type="disulfide bond" evidence="4">
    <location>
        <begin position="108"/>
        <end position="150"/>
    </location>
</feature>
<feature type="disulfide bond" evidence="4">
    <location>
        <begin position="136"/>
        <end position="166"/>
    </location>
</feature>
<feature type="disulfide bond" evidence="4">
    <location>
        <begin position="171"/>
        <end position="219"/>
    </location>
</feature>
<feature type="disulfide bond" evidence="4">
    <location>
        <begin position="200"/>
        <end position="232"/>
    </location>
</feature>
<feature type="disulfide bond" evidence="4">
    <location>
        <begin position="237"/>
        <end position="279"/>
    </location>
</feature>
<feature type="disulfide bond" evidence="4">
    <location>
        <begin position="265"/>
        <end position="292"/>
    </location>
</feature>
<feature type="splice variant" id="VSP_019040" description="In isoform 2." evidence="9">
    <location>
        <begin position="312"/>
        <end position="329"/>
    </location>
</feature>
<feature type="sequence conflict" description="In Ref. 2; AA sequence." evidence="10" ref="2">
    <original>F</original>
    <variation>V</variation>
    <location>
        <position position="58"/>
    </location>
</feature>
<gene>
    <name type="primary">CD46</name>
    <name type="synonym">MCP</name>
</gene>
<accession>O02839</accession>
<proteinExistence type="evidence at protein level"/>
<keyword id="KW-0025">Alternative splicing</keyword>
<keyword id="KW-0180">Complement pathway</keyword>
<keyword id="KW-0968">Cytoplasmic vesicle</keyword>
<keyword id="KW-0903">Direct protein sequencing</keyword>
<keyword id="KW-1015">Disulfide bond</keyword>
<keyword id="KW-0278">Fertilization</keyword>
<keyword id="KW-0325">Glycoprotein</keyword>
<keyword id="KW-0391">Immunity</keyword>
<keyword id="KW-0399">Innate immunity</keyword>
<keyword id="KW-0472">Membrane</keyword>
<keyword id="KW-1185">Reference proteome</keyword>
<keyword id="KW-0677">Repeat</keyword>
<keyword id="KW-0732">Signal</keyword>
<keyword id="KW-0768">Sushi</keyword>
<keyword id="KW-0812">Transmembrane</keyword>
<keyword id="KW-1133">Transmembrane helix</keyword>
<name>MCP_PIG</name>
<protein>
    <recommendedName>
        <fullName>Membrane cofactor protein</fullName>
    </recommendedName>
    <cdAntigenName>CD46</cdAntigenName>
</protein>
<comment type="function">
    <text evidence="7 8">Acts as a cofactor for complement factor I, a serine protease which protects autologous cells against complement-mediated injury by cleaving C3b and C4b deposited on host tissue. May be involved in the fusion of the spermatozoa with the oocyte during fertilization. May act as a costimulatory factor for T-cells which induces the differentiation of CD4+ into T-regulatory 1 cells. T-regulatory 1 cells suppress immune responses by secreting interleukin-10, and therefore are thought to prevent autoimmunity.</text>
</comment>
<comment type="subunit">
    <text evidence="2">Interacts with C3b. Interacts with C4b. Interacts with moesin/MSN.</text>
</comment>
<comment type="subcellular location">
    <subcellularLocation>
        <location evidence="1">Cytoplasmic vesicle</location>
        <location evidence="1">Secretory vesicle</location>
        <location evidence="1">Acrosome inner membrane</location>
        <topology evidence="1">Single-pass type I membrane protein</topology>
    </subcellularLocation>
    <text evidence="1">Inner acrosomal membrane of spermatozoa.</text>
</comment>
<comment type="alternative products">
    <event type="alternative splicing"/>
    <isoform>
        <id>O02839-1</id>
        <name>1</name>
        <sequence type="displayed"/>
    </isoform>
    <isoform>
        <id>O02839-2</id>
        <name>2</name>
        <sequence type="described" ref="VSP_019040"/>
    </isoform>
</comment>
<comment type="tissue specificity">
    <text evidence="6 7 8">Broadly expressed. Expressed on erythrocytes, leukocytes, granulocytes, platelets, vascular endothelial cells and kidney epithelial cells. Not or weakly expressed in muscle cells and skin (at protein level).</text>
</comment>
<comment type="PTM">
    <text evidence="7">N-glycosylated.</text>
</comment>
<comment type="PTM">
    <text evidence="7">May be O-glycosylated.</text>
</comment>